<comment type="function">
    <text evidence="1">Pyrophosphatase that catalyzes the hydrolysis of nucleoside triphosphates to their monophosphate derivatives, with a high preference for the non-canonical purine nucleotides XTP (xanthosine triphosphate), dITP (deoxyinosine triphosphate) and ITP. Seems to function as a house-cleaning enzyme that removes non-canonical purine nucleotides from the nucleotide pool, thus preventing their incorporation into DNA/RNA and avoiding chromosomal lesions.</text>
</comment>
<comment type="catalytic activity">
    <reaction evidence="1">
        <text>XTP + H2O = XMP + diphosphate + H(+)</text>
        <dbReference type="Rhea" id="RHEA:28610"/>
        <dbReference type="ChEBI" id="CHEBI:15377"/>
        <dbReference type="ChEBI" id="CHEBI:15378"/>
        <dbReference type="ChEBI" id="CHEBI:33019"/>
        <dbReference type="ChEBI" id="CHEBI:57464"/>
        <dbReference type="ChEBI" id="CHEBI:61314"/>
        <dbReference type="EC" id="3.6.1.66"/>
    </reaction>
</comment>
<comment type="catalytic activity">
    <reaction evidence="1">
        <text>dITP + H2O = dIMP + diphosphate + H(+)</text>
        <dbReference type="Rhea" id="RHEA:28342"/>
        <dbReference type="ChEBI" id="CHEBI:15377"/>
        <dbReference type="ChEBI" id="CHEBI:15378"/>
        <dbReference type="ChEBI" id="CHEBI:33019"/>
        <dbReference type="ChEBI" id="CHEBI:61194"/>
        <dbReference type="ChEBI" id="CHEBI:61382"/>
        <dbReference type="EC" id="3.6.1.66"/>
    </reaction>
</comment>
<comment type="catalytic activity">
    <reaction evidence="1">
        <text>ITP + H2O = IMP + diphosphate + H(+)</text>
        <dbReference type="Rhea" id="RHEA:29399"/>
        <dbReference type="ChEBI" id="CHEBI:15377"/>
        <dbReference type="ChEBI" id="CHEBI:15378"/>
        <dbReference type="ChEBI" id="CHEBI:33019"/>
        <dbReference type="ChEBI" id="CHEBI:58053"/>
        <dbReference type="ChEBI" id="CHEBI:61402"/>
        <dbReference type="EC" id="3.6.1.66"/>
    </reaction>
</comment>
<comment type="cofactor">
    <cofactor evidence="1">
        <name>Mg(2+)</name>
        <dbReference type="ChEBI" id="CHEBI:18420"/>
    </cofactor>
    <text evidence="1">Binds 1 Mg(2+) ion per subunit.</text>
</comment>
<comment type="subunit">
    <text evidence="1">Homodimer.</text>
</comment>
<comment type="similarity">
    <text evidence="1">Belongs to the HAM1 NTPase family.</text>
</comment>
<comment type="sequence caution" evidence="2">
    <conflict type="erroneous initiation">
        <sequence resource="EMBL-CDS" id="AAM42523"/>
    </conflict>
    <text>Extended N-terminus.</text>
</comment>
<protein>
    <recommendedName>
        <fullName evidence="1">dITP/XTP pyrophosphatase</fullName>
        <ecNumber evidence="1">3.6.1.66</ecNumber>
    </recommendedName>
    <alternativeName>
        <fullName evidence="1">Non-canonical purine NTP pyrophosphatase</fullName>
    </alternativeName>
    <alternativeName>
        <fullName evidence="1">Non-standard purine NTP pyrophosphatase</fullName>
    </alternativeName>
    <alternativeName>
        <fullName evidence="1">Nucleoside-triphosphate diphosphatase</fullName>
    </alternativeName>
    <alternativeName>
        <fullName evidence="1">Nucleoside-triphosphate pyrophosphatase</fullName>
        <shortName evidence="1">NTPase</shortName>
    </alternativeName>
</protein>
<name>IXTPA_XANCP</name>
<accession>Q8P5T3</accession>
<organism>
    <name type="scientific">Xanthomonas campestris pv. campestris (strain ATCC 33913 / DSM 3586 / NCPPB 528 / LMG 568 / P 25)</name>
    <dbReference type="NCBI Taxonomy" id="190485"/>
    <lineage>
        <taxon>Bacteria</taxon>
        <taxon>Pseudomonadati</taxon>
        <taxon>Pseudomonadota</taxon>
        <taxon>Gammaproteobacteria</taxon>
        <taxon>Lysobacterales</taxon>
        <taxon>Lysobacteraceae</taxon>
        <taxon>Xanthomonas</taxon>
    </lineage>
</organism>
<gene>
    <name type="ordered locus">XCC3253</name>
</gene>
<keyword id="KW-0378">Hydrolase</keyword>
<keyword id="KW-0460">Magnesium</keyword>
<keyword id="KW-0479">Metal-binding</keyword>
<keyword id="KW-0546">Nucleotide metabolism</keyword>
<keyword id="KW-0547">Nucleotide-binding</keyword>
<keyword id="KW-1185">Reference proteome</keyword>
<dbReference type="EC" id="3.6.1.66" evidence="1"/>
<dbReference type="EMBL" id="AE008922">
    <property type="protein sequence ID" value="AAM42523.1"/>
    <property type="status" value="ALT_INIT"/>
    <property type="molecule type" value="Genomic_DNA"/>
</dbReference>
<dbReference type="RefSeq" id="NP_638599.1">
    <property type="nucleotide sequence ID" value="NC_003902.1"/>
</dbReference>
<dbReference type="SMR" id="Q8P5T3"/>
<dbReference type="STRING" id="190485.XCC3253"/>
<dbReference type="EnsemblBacteria" id="AAM42523">
    <property type="protein sequence ID" value="AAM42523"/>
    <property type="gene ID" value="XCC3253"/>
</dbReference>
<dbReference type="KEGG" id="xcc:XCC3253"/>
<dbReference type="PATRIC" id="fig|190485.4.peg.3476"/>
<dbReference type="eggNOG" id="COG0127">
    <property type="taxonomic scope" value="Bacteria"/>
</dbReference>
<dbReference type="HOGENOM" id="CLU_082080_0_3_6"/>
<dbReference type="OrthoDB" id="9807456at2"/>
<dbReference type="Proteomes" id="UP000001010">
    <property type="component" value="Chromosome"/>
</dbReference>
<dbReference type="GO" id="GO:0005737">
    <property type="term" value="C:cytoplasm"/>
    <property type="evidence" value="ECO:0000318"/>
    <property type="project" value="GO_Central"/>
</dbReference>
<dbReference type="GO" id="GO:0005829">
    <property type="term" value="C:cytosol"/>
    <property type="evidence" value="ECO:0000318"/>
    <property type="project" value="GO_Central"/>
</dbReference>
<dbReference type="GO" id="GO:0035870">
    <property type="term" value="F:dITP diphosphatase activity"/>
    <property type="evidence" value="ECO:0007669"/>
    <property type="project" value="RHEA"/>
</dbReference>
<dbReference type="GO" id="GO:0036220">
    <property type="term" value="F:ITP diphosphatase activity"/>
    <property type="evidence" value="ECO:0007669"/>
    <property type="project" value="UniProtKB-EC"/>
</dbReference>
<dbReference type="GO" id="GO:0046872">
    <property type="term" value="F:metal ion binding"/>
    <property type="evidence" value="ECO:0007669"/>
    <property type="project" value="UniProtKB-KW"/>
</dbReference>
<dbReference type="GO" id="GO:0047429">
    <property type="term" value="F:nucleoside triphosphate diphosphatase activity"/>
    <property type="evidence" value="ECO:0000318"/>
    <property type="project" value="GO_Central"/>
</dbReference>
<dbReference type="GO" id="GO:0000166">
    <property type="term" value="F:nucleotide binding"/>
    <property type="evidence" value="ECO:0007669"/>
    <property type="project" value="UniProtKB-KW"/>
</dbReference>
<dbReference type="GO" id="GO:0017111">
    <property type="term" value="F:ribonucleoside triphosphate phosphatase activity"/>
    <property type="evidence" value="ECO:0007669"/>
    <property type="project" value="InterPro"/>
</dbReference>
<dbReference type="GO" id="GO:0036222">
    <property type="term" value="F:XTP diphosphatase activity"/>
    <property type="evidence" value="ECO:0007669"/>
    <property type="project" value="RHEA"/>
</dbReference>
<dbReference type="GO" id="GO:0009143">
    <property type="term" value="P:nucleoside triphosphate catabolic process"/>
    <property type="evidence" value="ECO:0000318"/>
    <property type="project" value="GO_Central"/>
</dbReference>
<dbReference type="GO" id="GO:0009117">
    <property type="term" value="P:nucleotide metabolic process"/>
    <property type="evidence" value="ECO:0007669"/>
    <property type="project" value="UniProtKB-KW"/>
</dbReference>
<dbReference type="GO" id="GO:0009146">
    <property type="term" value="P:purine nucleoside triphosphate catabolic process"/>
    <property type="evidence" value="ECO:0007669"/>
    <property type="project" value="UniProtKB-UniRule"/>
</dbReference>
<dbReference type="CDD" id="cd00515">
    <property type="entry name" value="HAM1"/>
    <property type="match status" value="1"/>
</dbReference>
<dbReference type="FunFam" id="3.90.950.10:FF:000001">
    <property type="entry name" value="dITP/XTP pyrophosphatase"/>
    <property type="match status" value="1"/>
</dbReference>
<dbReference type="Gene3D" id="3.90.950.10">
    <property type="match status" value="1"/>
</dbReference>
<dbReference type="HAMAP" id="MF_01405">
    <property type="entry name" value="Non_canon_purine_NTPase"/>
    <property type="match status" value="1"/>
</dbReference>
<dbReference type="InterPro" id="IPR020922">
    <property type="entry name" value="dITP/XTP_pyrophosphatase"/>
</dbReference>
<dbReference type="InterPro" id="IPR029001">
    <property type="entry name" value="ITPase-like_fam"/>
</dbReference>
<dbReference type="InterPro" id="IPR002637">
    <property type="entry name" value="RdgB/HAM1"/>
</dbReference>
<dbReference type="NCBIfam" id="TIGR00042">
    <property type="entry name" value="RdgB/HAM1 family non-canonical purine NTP pyrophosphatase"/>
    <property type="match status" value="1"/>
</dbReference>
<dbReference type="PANTHER" id="PTHR11067:SF9">
    <property type="entry name" value="INOSINE TRIPHOSPHATE PYROPHOSPHATASE"/>
    <property type="match status" value="1"/>
</dbReference>
<dbReference type="PANTHER" id="PTHR11067">
    <property type="entry name" value="INOSINE TRIPHOSPHATE PYROPHOSPHATASE/HAM1 PROTEIN"/>
    <property type="match status" value="1"/>
</dbReference>
<dbReference type="Pfam" id="PF01725">
    <property type="entry name" value="Ham1p_like"/>
    <property type="match status" value="1"/>
</dbReference>
<dbReference type="SUPFAM" id="SSF52972">
    <property type="entry name" value="ITPase-like"/>
    <property type="match status" value="1"/>
</dbReference>
<proteinExistence type="inferred from homology"/>
<evidence type="ECO:0000255" key="1">
    <source>
        <dbReference type="HAMAP-Rule" id="MF_01405"/>
    </source>
</evidence>
<evidence type="ECO:0000305" key="2"/>
<feature type="chain" id="PRO_0000178267" description="dITP/XTP pyrophosphatase">
    <location>
        <begin position="1"/>
        <end position="199"/>
    </location>
</feature>
<feature type="active site" description="Proton acceptor" evidence="1">
    <location>
        <position position="69"/>
    </location>
</feature>
<feature type="binding site" evidence="1">
    <location>
        <begin position="8"/>
        <end position="13"/>
    </location>
    <ligand>
        <name>substrate</name>
    </ligand>
</feature>
<feature type="binding site" evidence="1">
    <location>
        <position position="69"/>
    </location>
    <ligand>
        <name>Mg(2+)</name>
        <dbReference type="ChEBI" id="CHEBI:18420"/>
    </ligand>
</feature>
<feature type="binding site" evidence="1">
    <location>
        <position position="70"/>
    </location>
    <ligand>
        <name>substrate</name>
    </ligand>
</feature>
<feature type="binding site" evidence="1">
    <location>
        <begin position="154"/>
        <end position="157"/>
    </location>
    <ligand>
        <name>substrate</name>
    </ligand>
</feature>
<feature type="binding site" evidence="1">
    <location>
        <position position="177"/>
    </location>
    <ligand>
        <name>substrate</name>
    </ligand>
</feature>
<feature type="binding site" evidence="1">
    <location>
        <begin position="182"/>
        <end position="183"/>
    </location>
    <ligand>
        <name>substrate</name>
    </ligand>
</feature>
<reference key="1">
    <citation type="journal article" date="2002" name="Nature">
        <title>Comparison of the genomes of two Xanthomonas pathogens with differing host specificities.</title>
        <authorList>
            <person name="da Silva A.C.R."/>
            <person name="Ferro J.A."/>
            <person name="Reinach F.C."/>
            <person name="Farah C.S."/>
            <person name="Furlan L.R."/>
            <person name="Quaggio R.B."/>
            <person name="Monteiro-Vitorello C.B."/>
            <person name="Van Sluys M.A."/>
            <person name="Almeida N.F. Jr."/>
            <person name="Alves L.M.C."/>
            <person name="do Amaral A.M."/>
            <person name="Bertolini M.C."/>
            <person name="Camargo L.E.A."/>
            <person name="Camarotte G."/>
            <person name="Cannavan F."/>
            <person name="Cardozo J."/>
            <person name="Chambergo F."/>
            <person name="Ciapina L.P."/>
            <person name="Cicarelli R.M.B."/>
            <person name="Coutinho L.L."/>
            <person name="Cursino-Santos J.R."/>
            <person name="El-Dorry H."/>
            <person name="Faria J.B."/>
            <person name="Ferreira A.J.S."/>
            <person name="Ferreira R.C.C."/>
            <person name="Ferro M.I.T."/>
            <person name="Formighieri E.F."/>
            <person name="Franco M.C."/>
            <person name="Greggio C.C."/>
            <person name="Gruber A."/>
            <person name="Katsuyama A.M."/>
            <person name="Kishi L.T."/>
            <person name="Leite R.P."/>
            <person name="Lemos E.G.M."/>
            <person name="Lemos M.V.F."/>
            <person name="Locali E.C."/>
            <person name="Machado M.A."/>
            <person name="Madeira A.M.B.N."/>
            <person name="Martinez-Rossi N.M."/>
            <person name="Martins E.C."/>
            <person name="Meidanis J."/>
            <person name="Menck C.F.M."/>
            <person name="Miyaki C.Y."/>
            <person name="Moon D.H."/>
            <person name="Moreira L.M."/>
            <person name="Novo M.T.M."/>
            <person name="Okura V.K."/>
            <person name="Oliveira M.C."/>
            <person name="Oliveira V.R."/>
            <person name="Pereira H.A."/>
            <person name="Rossi A."/>
            <person name="Sena J.A.D."/>
            <person name="Silva C."/>
            <person name="de Souza R.F."/>
            <person name="Spinola L.A.F."/>
            <person name="Takita M.A."/>
            <person name="Tamura R.E."/>
            <person name="Teixeira E.C."/>
            <person name="Tezza R.I.D."/>
            <person name="Trindade dos Santos M."/>
            <person name="Truffi D."/>
            <person name="Tsai S.M."/>
            <person name="White F.F."/>
            <person name="Setubal J.C."/>
            <person name="Kitajima J.P."/>
        </authorList>
    </citation>
    <scope>NUCLEOTIDE SEQUENCE [LARGE SCALE GENOMIC DNA]</scope>
    <source>
        <strain>ATCC 33913 / DSM 3586 / NCPPB 528 / LMG 568 / P 25</strain>
    </source>
</reference>
<sequence length="199" mass="21012">MKHLVLASGNAGKLEELRAMLADLPLQIVAQGELGVDDVPETGLTFVENALIKARHASTVTGLPALADDSGLIVDALGGAPGLYSARYAGSPTDANANNAKLLEAMREIPAERRSARFYAVIVLLRHPEDPQPLIAEGSWEGVITTAPRGTGGFGYNPVFLDPVHGLTAAEMDTALKNRLSHRAVALATLQHKLHALSL</sequence>